<name>NSP2_ROTAP</name>
<organism>
    <name type="scientific">Rotavirus A (isolate RVA/Cow/South/Africa/Offal agent/1965/G8P6[1])</name>
    <name type="common">RV-A</name>
    <dbReference type="NCBI Taxonomy" id="578837"/>
    <lineage>
        <taxon>Viruses</taxon>
        <taxon>Riboviria</taxon>
        <taxon>Orthornavirae</taxon>
        <taxon>Duplornaviricota</taxon>
        <taxon>Resentoviricetes</taxon>
        <taxon>Reovirales</taxon>
        <taxon>Sedoreoviridae</taxon>
        <taxon>Rotavirus</taxon>
        <taxon>Rotavirus A</taxon>
    </lineage>
</organism>
<sequence length="317" mass="36628">MAELACFCYPHLENDSYRFIPFNSLAIKCMLTAKVDKKDQDKFYNSIIYGIAPPPQFKKRYNTSDNSRGMNYETSMFNKVAALICEALNSIKVTQSDVASVLSKIVSVRHLENLVLRRENHQDVLFHSKELLLKSVLIAIGHSKEIETTATAEGGEIVFQNAAFTMWKLTYLEHKLMPILDQNFIEYKITLNEDKPISESHVKELIAELRWQYNKFAVITHGKGHYRVVKYSSVANHADRVYATFKSNNKNGNMIEFNLLDQRIIWQNWYAFTSSMKQGNTLEICKKLLFQKMKRESNPFKGLSTDRKMDEVSQIGI</sequence>
<accession>A2T3M2</accession>
<reference key="1">
    <citation type="journal article" date="2007" name="Virology">
        <title>Genome heterogeneity of SA11 rotavirus due to reassortment with 'O' agent.</title>
        <authorList>
            <person name="Small C."/>
            <person name="Barro M."/>
            <person name="Brown T.L."/>
            <person name="Patton J.T."/>
        </authorList>
    </citation>
    <scope>NUCLEOTIDE SEQUENCE [GENOMIC RNA]</scope>
</reference>
<protein>
    <recommendedName>
        <fullName evidence="1">Non-structural protein 2</fullName>
        <shortName evidence="1">NSP2</shortName>
        <ecNumber evidence="1">3.6.4.-</ecNumber>
    </recommendedName>
    <alternativeName>
        <fullName evidence="1">NCVP3</fullName>
    </alternativeName>
    <alternativeName>
        <fullName evidence="1">Non-structural RNA-binding protein 35</fullName>
        <shortName evidence="1">NS35</shortName>
    </alternativeName>
</protein>
<evidence type="ECO:0000255" key="1">
    <source>
        <dbReference type="HAMAP-Rule" id="MF_04089"/>
    </source>
</evidence>
<keyword id="KW-0067">ATP-binding</keyword>
<keyword id="KW-1035">Host cytoplasm</keyword>
<keyword id="KW-0378">Hydrolase</keyword>
<keyword id="KW-0460">Magnesium</keyword>
<keyword id="KW-0479">Metal-binding</keyword>
<keyword id="KW-0547">Nucleotide-binding</keyword>
<keyword id="KW-0694">RNA-binding</keyword>
<comment type="function">
    <text evidence="1">Participates in replication and packaging of the viral genome. Plays a crucial role, together with NSP5, in the formation of virus factories (viroplasms), which are large inclusions in the host cytoplasm where replication intermediates are assembled and viral RNA replication takes place. Displays ssRNA binding, NTPase, RNA triphosphatase (RTPase) and ATP-independent helix-unwinding activities. The unwinding activity may prepare and organize plus-strand RNAs for packaging and replication by removing interfering secondary structures. The RTPase activity plays a role in the removal of the gamma-phosphate from the rotavirus RNA minus strands of dsRNA genome segments. Participates in the selective exclusion of host proteins from stress granules (SG) and P bodies (PB). Also participates in the sequestration of these remodeled organelles in viral factories.</text>
</comment>
<comment type="cofactor">
    <cofactor evidence="1">
        <name>Mg(2+)</name>
        <dbReference type="ChEBI" id="CHEBI:18420"/>
    </cofactor>
</comment>
<comment type="subunit">
    <text evidence="1">Homooctamer. Interacts with VP1; this interaction is weak. Interacts with NSP5; this interaction leads to up-regulation of NSP5 phosphorylation and formation of viral factories. Interacts with host DCP1A, DCP1B, DDX6, EDC4 and EIF2S1/eIF2-alpha; these interactions are probably part of the sequestration of some host SGs and PBs proteins in viral factories.</text>
</comment>
<comment type="subcellular location">
    <subcellularLocation>
        <location evidence="1">Host cytoplasm</location>
    </subcellularLocation>
    <text evidence="1">Found in spherical cytoplasmic structures, called viral factories, that appear early after infection and are the site of viral replication and packaging.</text>
</comment>
<comment type="similarity">
    <text evidence="1">Belongs to the rotavirus NSP2 family.</text>
</comment>
<organismHost>
    <name type="scientific">Bos taurus</name>
    <name type="common">Bovine</name>
    <dbReference type="NCBI Taxonomy" id="9913"/>
</organismHost>
<feature type="chain" id="PRO_0000369528" description="Non-structural protein 2">
    <location>
        <begin position="1"/>
        <end position="317"/>
    </location>
</feature>
<feature type="region of interest" description="RNA-binding" evidence="1">
    <location>
        <begin position="205"/>
        <end position="241"/>
    </location>
</feature>
<feature type="active site" description="For NTPase and RTPase activities" evidence="1">
    <location>
        <position position="225"/>
    </location>
</feature>
<feature type="binding site" evidence="1">
    <location>
        <begin position="107"/>
        <end position="109"/>
    </location>
    <ligand>
        <name>ATP</name>
        <dbReference type="ChEBI" id="CHEBI:30616"/>
    </ligand>
</feature>
<feature type="binding site" evidence="1">
    <location>
        <position position="188"/>
    </location>
    <ligand>
        <name>ATP</name>
        <dbReference type="ChEBI" id="CHEBI:30616"/>
    </ligand>
</feature>
<feature type="binding site" evidence="1">
    <location>
        <begin position="221"/>
        <end position="223"/>
    </location>
    <ligand>
        <name>ATP</name>
        <dbReference type="ChEBI" id="CHEBI:30616"/>
    </ligand>
</feature>
<feature type="binding site" evidence="1">
    <location>
        <position position="227"/>
    </location>
    <ligand>
        <name>ATP</name>
        <dbReference type="ChEBI" id="CHEBI:30616"/>
    </ligand>
</feature>
<proteinExistence type="inferred from homology"/>
<dbReference type="EC" id="3.6.4.-" evidence="1"/>
<dbReference type="EMBL" id="DQ838597">
    <property type="protein sequence ID" value="ABG75771.1"/>
    <property type="molecule type" value="Genomic_RNA"/>
</dbReference>
<dbReference type="SMR" id="A2T3M2"/>
<dbReference type="GO" id="GO:0030430">
    <property type="term" value="C:host cell cytoplasm"/>
    <property type="evidence" value="ECO:0007669"/>
    <property type="project" value="UniProtKB-SubCell"/>
</dbReference>
<dbReference type="GO" id="GO:0005524">
    <property type="term" value="F:ATP binding"/>
    <property type="evidence" value="ECO:0007669"/>
    <property type="project" value="UniProtKB-KW"/>
</dbReference>
<dbReference type="GO" id="GO:0046872">
    <property type="term" value="F:metal ion binding"/>
    <property type="evidence" value="ECO:0007669"/>
    <property type="project" value="UniProtKB-UniRule"/>
</dbReference>
<dbReference type="GO" id="GO:0004550">
    <property type="term" value="F:nucleoside diphosphate kinase activity"/>
    <property type="evidence" value="ECO:0007669"/>
    <property type="project" value="InterPro"/>
</dbReference>
<dbReference type="GO" id="GO:0017111">
    <property type="term" value="F:ribonucleoside triphosphate phosphatase activity"/>
    <property type="evidence" value="ECO:0007669"/>
    <property type="project" value="InterPro"/>
</dbReference>
<dbReference type="GO" id="GO:0003723">
    <property type="term" value="F:RNA binding"/>
    <property type="evidence" value="ECO:0007669"/>
    <property type="project" value="UniProtKB-UniRule"/>
</dbReference>
<dbReference type="GO" id="GO:0019079">
    <property type="term" value="P:viral genome replication"/>
    <property type="evidence" value="ECO:0007669"/>
    <property type="project" value="UniProtKB-UniRule"/>
</dbReference>
<dbReference type="Gene3D" id="3.30.428.20">
    <property type="entry name" value="Rotavirus NSP2 fragment, C-terminal domain"/>
    <property type="match status" value="1"/>
</dbReference>
<dbReference type="Gene3D" id="3.90.1400.10">
    <property type="entry name" value="Rotavirus NSP2 fragment, N-terminal domain"/>
    <property type="match status" value="1"/>
</dbReference>
<dbReference type="HAMAP" id="MF_04089">
    <property type="entry name" value="ROTA_NSP2"/>
    <property type="match status" value="1"/>
</dbReference>
<dbReference type="InterPro" id="IPR048306">
    <property type="entry name" value="Rota_NS35_C"/>
</dbReference>
<dbReference type="InterPro" id="IPR048573">
    <property type="entry name" value="Rota_NS35_N"/>
</dbReference>
<dbReference type="InterPro" id="IPR003668">
    <property type="entry name" value="Rotavirus_NSP2"/>
</dbReference>
<dbReference type="InterPro" id="IPR024076">
    <property type="entry name" value="Rotavirus_NSP2_C"/>
</dbReference>
<dbReference type="InterPro" id="IPR024068">
    <property type="entry name" value="Rotavirus_NSP2_N"/>
</dbReference>
<dbReference type="Pfam" id="PF02509">
    <property type="entry name" value="Rota_NS35_C"/>
    <property type="match status" value="1"/>
</dbReference>
<dbReference type="Pfam" id="PF21067">
    <property type="entry name" value="Rota_NS35_N"/>
    <property type="match status" value="1"/>
</dbReference>
<dbReference type="SUPFAM" id="SSF75347">
    <property type="entry name" value="Rotavirus NSP2 fragment, C-terminal domain"/>
    <property type="match status" value="1"/>
</dbReference>
<dbReference type="SUPFAM" id="SSF75574">
    <property type="entry name" value="Rotavirus NSP2 fragment, N-terminal domain"/>
    <property type="match status" value="1"/>
</dbReference>